<name>FUCI_ECO45</name>
<accession>B7MLC3</accession>
<dbReference type="EC" id="5.3.1.25" evidence="1"/>
<dbReference type="EMBL" id="CU928161">
    <property type="protein sequence ID" value="CAR04312.1"/>
    <property type="molecule type" value="Genomic_DNA"/>
</dbReference>
<dbReference type="RefSeq" id="WP_000724161.1">
    <property type="nucleotide sequence ID" value="NC_011742.1"/>
</dbReference>
<dbReference type="SMR" id="B7MLC3"/>
<dbReference type="KEGG" id="ecz:ECS88_3071"/>
<dbReference type="HOGENOM" id="CLU_033326_1_0_6"/>
<dbReference type="UniPathway" id="UPA00563">
    <property type="reaction ID" value="UER00624"/>
</dbReference>
<dbReference type="Proteomes" id="UP000000747">
    <property type="component" value="Chromosome"/>
</dbReference>
<dbReference type="GO" id="GO:0005737">
    <property type="term" value="C:cytoplasm"/>
    <property type="evidence" value="ECO:0007669"/>
    <property type="project" value="UniProtKB-SubCell"/>
</dbReference>
<dbReference type="GO" id="GO:0008790">
    <property type="term" value="F:arabinose isomerase activity"/>
    <property type="evidence" value="ECO:0007669"/>
    <property type="project" value="TreeGrafter"/>
</dbReference>
<dbReference type="GO" id="GO:0008736">
    <property type="term" value="F:L-fucose isomerase activity"/>
    <property type="evidence" value="ECO:0007669"/>
    <property type="project" value="UniProtKB-UniRule"/>
</dbReference>
<dbReference type="GO" id="GO:0030145">
    <property type="term" value="F:manganese ion binding"/>
    <property type="evidence" value="ECO:0007669"/>
    <property type="project" value="UniProtKB-UniRule"/>
</dbReference>
<dbReference type="GO" id="GO:0019571">
    <property type="term" value="P:D-arabinose catabolic process"/>
    <property type="evidence" value="ECO:0007669"/>
    <property type="project" value="TreeGrafter"/>
</dbReference>
<dbReference type="GO" id="GO:0042355">
    <property type="term" value="P:L-fucose catabolic process"/>
    <property type="evidence" value="ECO:0007669"/>
    <property type="project" value="UniProtKB-UniRule"/>
</dbReference>
<dbReference type="CDD" id="cd03556">
    <property type="entry name" value="L-fucose_isomerase"/>
    <property type="match status" value="1"/>
</dbReference>
<dbReference type="FunFam" id="3.20.14.10:FF:000001">
    <property type="entry name" value="L-fucose isomerase"/>
    <property type="match status" value="1"/>
</dbReference>
<dbReference type="FunFam" id="3.40.275.10:FF:000001">
    <property type="entry name" value="L-fucose isomerase"/>
    <property type="match status" value="1"/>
</dbReference>
<dbReference type="FunFam" id="3.40.50.1070:FF:000001">
    <property type="entry name" value="L-fucose isomerase"/>
    <property type="match status" value="1"/>
</dbReference>
<dbReference type="Gene3D" id="3.40.50.1070">
    <property type="match status" value="1"/>
</dbReference>
<dbReference type="Gene3D" id="3.40.275.10">
    <property type="entry name" value="L-fucose Isomerase, Chain A, domain 2"/>
    <property type="match status" value="1"/>
</dbReference>
<dbReference type="Gene3D" id="3.20.14.10">
    <property type="entry name" value="L-fucose/L-arabinose isomerase, C-terminal"/>
    <property type="match status" value="1"/>
</dbReference>
<dbReference type="HAMAP" id="MF_01254">
    <property type="entry name" value="Fucose_iso"/>
    <property type="match status" value="1"/>
</dbReference>
<dbReference type="InterPro" id="IPR004216">
    <property type="entry name" value="Fuc/Ara_isomerase_C"/>
</dbReference>
<dbReference type="InterPro" id="IPR038393">
    <property type="entry name" value="Fuc_iso_dom3_sf"/>
</dbReference>
<dbReference type="InterPro" id="IPR015888">
    <property type="entry name" value="Fuc_isomerase_C"/>
</dbReference>
<dbReference type="InterPro" id="IPR038391">
    <property type="entry name" value="Fucose_iso_dom1_sf"/>
</dbReference>
<dbReference type="InterPro" id="IPR012888">
    <property type="entry name" value="Fucose_iso_N1"/>
</dbReference>
<dbReference type="InterPro" id="IPR005763">
    <property type="entry name" value="Fucose_isomerase"/>
</dbReference>
<dbReference type="InterPro" id="IPR038392">
    <property type="entry name" value="Fucose_isomerase_dom2_sf"/>
</dbReference>
<dbReference type="InterPro" id="IPR009015">
    <property type="entry name" value="Fucose_isomerase_N/cen_sf"/>
</dbReference>
<dbReference type="InterPro" id="IPR012889">
    <property type="entry name" value="Fucose_isomerase_N2"/>
</dbReference>
<dbReference type="NCBIfam" id="TIGR01089">
    <property type="entry name" value="fucI"/>
    <property type="match status" value="1"/>
</dbReference>
<dbReference type="NCBIfam" id="NF008220">
    <property type="entry name" value="PRK10991.1"/>
    <property type="match status" value="1"/>
</dbReference>
<dbReference type="PANTHER" id="PTHR37840">
    <property type="entry name" value="L-FUCOSE ISOMERASE"/>
    <property type="match status" value="1"/>
</dbReference>
<dbReference type="PANTHER" id="PTHR37840:SF1">
    <property type="entry name" value="L-FUCOSE ISOMERASE"/>
    <property type="match status" value="1"/>
</dbReference>
<dbReference type="Pfam" id="PF02952">
    <property type="entry name" value="Fucose_iso_C"/>
    <property type="match status" value="1"/>
</dbReference>
<dbReference type="Pfam" id="PF07881">
    <property type="entry name" value="Fucose_iso_N1"/>
    <property type="match status" value="1"/>
</dbReference>
<dbReference type="Pfam" id="PF07882">
    <property type="entry name" value="Fucose_iso_N2"/>
    <property type="match status" value="1"/>
</dbReference>
<dbReference type="SUPFAM" id="SSF50443">
    <property type="entry name" value="FucI/AraA C-terminal domain-like"/>
    <property type="match status" value="1"/>
</dbReference>
<dbReference type="SUPFAM" id="SSF53743">
    <property type="entry name" value="FucI/AraA N-terminal and middle domains"/>
    <property type="match status" value="1"/>
</dbReference>
<proteinExistence type="inferred from homology"/>
<gene>
    <name evidence="1" type="primary">fucI</name>
    <name type="ordered locus">ECS88_3071</name>
</gene>
<keyword id="KW-0119">Carbohydrate metabolism</keyword>
<keyword id="KW-0963">Cytoplasm</keyword>
<keyword id="KW-0294">Fucose metabolism</keyword>
<keyword id="KW-0413">Isomerase</keyword>
<keyword id="KW-0464">Manganese</keyword>
<keyword id="KW-0479">Metal-binding</keyword>
<keyword id="KW-1185">Reference proteome</keyword>
<organism>
    <name type="scientific">Escherichia coli O45:K1 (strain S88 / ExPEC)</name>
    <dbReference type="NCBI Taxonomy" id="585035"/>
    <lineage>
        <taxon>Bacteria</taxon>
        <taxon>Pseudomonadati</taxon>
        <taxon>Pseudomonadota</taxon>
        <taxon>Gammaproteobacteria</taxon>
        <taxon>Enterobacterales</taxon>
        <taxon>Enterobacteriaceae</taxon>
        <taxon>Escherichia</taxon>
    </lineage>
</organism>
<reference key="1">
    <citation type="journal article" date="2009" name="PLoS Genet.">
        <title>Organised genome dynamics in the Escherichia coli species results in highly diverse adaptive paths.</title>
        <authorList>
            <person name="Touchon M."/>
            <person name="Hoede C."/>
            <person name="Tenaillon O."/>
            <person name="Barbe V."/>
            <person name="Baeriswyl S."/>
            <person name="Bidet P."/>
            <person name="Bingen E."/>
            <person name="Bonacorsi S."/>
            <person name="Bouchier C."/>
            <person name="Bouvet O."/>
            <person name="Calteau A."/>
            <person name="Chiapello H."/>
            <person name="Clermont O."/>
            <person name="Cruveiller S."/>
            <person name="Danchin A."/>
            <person name="Diard M."/>
            <person name="Dossat C."/>
            <person name="Karoui M.E."/>
            <person name="Frapy E."/>
            <person name="Garry L."/>
            <person name="Ghigo J.M."/>
            <person name="Gilles A.M."/>
            <person name="Johnson J."/>
            <person name="Le Bouguenec C."/>
            <person name="Lescat M."/>
            <person name="Mangenot S."/>
            <person name="Martinez-Jehanne V."/>
            <person name="Matic I."/>
            <person name="Nassif X."/>
            <person name="Oztas S."/>
            <person name="Petit M.A."/>
            <person name="Pichon C."/>
            <person name="Rouy Z."/>
            <person name="Ruf C.S."/>
            <person name="Schneider D."/>
            <person name="Tourret J."/>
            <person name="Vacherie B."/>
            <person name="Vallenet D."/>
            <person name="Medigue C."/>
            <person name="Rocha E.P.C."/>
            <person name="Denamur E."/>
        </authorList>
    </citation>
    <scope>NUCLEOTIDE SEQUENCE [LARGE SCALE GENOMIC DNA]</scope>
    <source>
        <strain>S88 / ExPEC</strain>
    </source>
</reference>
<feature type="chain" id="PRO_1000139948" description="L-fucose isomerase">
    <location>
        <begin position="1"/>
        <end position="591"/>
    </location>
</feature>
<feature type="active site" description="Proton acceptor" evidence="1">
    <location>
        <position position="337"/>
    </location>
</feature>
<feature type="active site" description="Proton acceptor" evidence="1">
    <location>
        <position position="361"/>
    </location>
</feature>
<feature type="binding site" evidence="1">
    <location>
        <position position="337"/>
    </location>
    <ligand>
        <name>Mn(2+)</name>
        <dbReference type="ChEBI" id="CHEBI:29035"/>
    </ligand>
</feature>
<feature type="binding site" evidence="1">
    <location>
        <position position="361"/>
    </location>
    <ligand>
        <name>Mn(2+)</name>
        <dbReference type="ChEBI" id="CHEBI:29035"/>
    </ligand>
</feature>
<feature type="binding site" evidence="1">
    <location>
        <position position="528"/>
    </location>
    <ligand>
        <name>Mn(2+)</name>
        <dbReference type="ChEBI" id="CHEBI:29035"/>
    </ligand>
</feature>
<sequence>MKKISLPKIGIRPVIDGRRMGVRESLEEQTMNMAKATAALLTEKLRHACGAAVECVISDTCIAGMAEAAACEEKFSSQNVGLTITVTPCWCYGSETIDMDPTRPKAIWGFNGTERPGAVYLAAALAAHSQKGIPAFSIYGHDVQDADDTSIPADVEEKLLRFARAGLAVASMKGKSYLSLGGVSMGIAGSIVDHNFFESWLGMKVQAVDMTELRRRIDQKIYDEAELEMALAWADKNFRYGEDENNKQYQRNAEQSRAVLRESLLMAMCIRDMMQGNSKLADIGRVEESLGYNAIAAGFQGQRHWTDQYPNGDTAEAILNSSFDWNGVRKPFVVATENDSLNGVAMLMGHQLTGTAQVFADVRTYWSPEAIERVTGHKLDGLAEHGIIHLINSGSAALDGSCKQRDSEGKPTMKPHWEISQQEADACLAATEWCPAIHEYFRGGGYSSRFLTEGGVPFTMTRVNIIKGLGPVLQIAEGWSVELPKDVHDILNKRTNSTWPTTWFAPRLTGKGPFTDVYSVMANWGANHGVLTIGHVGADFITLASMLRIPVCMHNVEETKVYRPSAWAAHGMDIEGQDYRACQNYGPLYKR</sequence>
<comment type="function">
    <text evidence="1">Converts the aldose L-fucose into the corresponding ketose L-fuculose.</text>
</comment>
<comment type="catalytic activity">
    <reaction evidence="1">
        <text>L-fucose = L-fuculose</text>
        <dbReference type="Rhea" id="RHEA:17233"/>
        <dbReference type="ChEBI" id="CHEBI:2181"/>
        <dbReference type="ChEBI" id="CHEBI:17617"/>
        <dbReference type="EC" id="5.3.1.25"/>
    </reaction>
</comment>
<comment type="cofactor">
    <cofactor evidence="1">
        <name>Mn(2+)</name>
        <dbReference type="ChEBI" id="CHEBI:29035"/>
    </cofactor>
</comment>
<comment type="pathway">
    <text evidence="1">Carbohydrate degradation; L-fucose degradation; L-lactaldehyde and glycerone phosphate from L-fucose: step 1/3.</text>
</comment>
<comment type="subunit">
    <text evidence="1">Homohexamer.</text>
</comment>
<comment type="subcellular location">
    <subcellularLocation>
        <location evidence="1">Cytoplasm</location>
    </subcellularLocation>
</comment>
<comment type="similarity">
    <text evidence="1">Belongs to the L-fucose isomerase family.</text>
</comment>
<protein>
    <recommendedName>
        <fullName evidence="1">L-fucose isomerase</fullName>
        <ecNumber evidence="1">5.3.1.25</ecNumber>
    </recommendedName>
    <alternativeName>
        <fullName evidence="1">6-deoxy-L-galactose isomerase</fullName>
    </alternativeName>
    <alternativeName>
        <fullName>FucIase</fullName>
    </alternativeName>
</protein>
<evidence type="ECO:0000255" key="1">
    <source>
        <dbReference type="HAMAP-Rule" id="MF_01254"/>
    </source>
</evidence>